<evidence type="ECO:0000250" key="1">
    <source>
        <dbReference type="UniProtKB" id="Q6GFF9"/>
    </source>
</evidence>
<evidence type="ECO:0000255" key="2">
    <source>
        <dbReference type="PROSITE-ProRule" id="PRU00783"/>
    </source>
</evidence>
<evidence type="ECO:0000305" key="3"/>
<organism>
    <name type="scientific">Staphylococcus aureus (strain NCTC 8325 / PS 47)</name>
    <dbReference type="NCBI Taxonomy" id="93061"/>
    <lineage>
        <taxon>Bacteria</taxon>
        <taxon>Bacillati</taxon>
        <taxon>Bacillota</taxon>
        <taxon>Bacilli</taxon>
        <taxon>Bacillales</taxon>
        <taxon>Staphylococcaceae</taxon>
        <taxon>Staphylococcus</taxon>
    </lineage>
</organism>
<gene>
    <name type="primary">dagK</name>
    <name type="ordered locus">SAOUHSC_02114</name>
</gene>
<protein>
    <recommendedName>
        <fullName>Diacylglycerol kinase</fullName>
        <shortName>DAG kinase</shortName>
        <shortName>DAGK</shortName>
        <ecNumber evidence="1">2.7.1.107</ecNumber>
    </recommendedName>
</protein>
<dbReference type="EC" id="2.7.1.107" evidence="1"/>
<dbReference type="EMBL" id="CP000253">
    <property type="protein sequence ID" value="ABD31164.1"/>
    <property type="molecule type" value="Genomic_DNA"/>
</dbReference>
<dbReference type="RefSeq" id="WP_001231451.1">
    <property type="nucleotide sequence ID" value="NZ_LS483365.1"/>
</dbReference>
<dbReference type="RefSeq" id="YP_500606.1">
    <property type="nucleotide sequence ID" value="NC_007795.1"/>
</dbReference>
<dbReference type="SMR" id="Q2FWZ2"/>
<dbReference type="STRING" id="93061.SAOUHSC_02114"/>
<dbReference type="PaxDb" id="1280-SAXN108_1996"/>
<dbReference type="GeneID" id="3921186"/>
<dbReference type="KEGG" id="sao:SAOUHSC_02114"/>
<dbReference type="PATRIC" id="fig|93061.5.peg.1918"/>
<dbReference type="eggNOG" id="COG1597">
    <property type="taxonomic scope" value="Bacteria"/>
</dbReference>
<dbReference type="HOGENOM" id="CLU_045532_1_0_9"/>
<dbReference type="OrthoDB" id="142078at2"/>
<dbReference type="PRO" id="PR:Q2FWZ2"/>
<dbReference type="Proteomes" id="UP000008816">
    <property type="component" value="Chromosome"/>
</dbReference>
<dbReference type="GO" id="GO:0005524">
    <property type="term" value="F:ATP binding"/>
    <property type="evidence" value="ECO:0007669"/>
    <property type="project" value="UniProtKB-KW"/>
</dbReference>
<dbReference type="GO" id="GO:0004143">
    <property type="term" value="F:ATP-dependent diacylglycerol kinase activity"/>
    <property type="evidence" value="ECO:0000318"/>
    <property type="project" value="GO_Central"/>
</dbReference>
<dbReference type="GO" id="GO:0046872">
    <property type="term" value="F:metal ion binding"/>
    <property type="evidence" value="ECO:0007669"/>
    <property type="project" value="UniProtKB-KW"/>
</dbReference>
<dbReference type="GO" id="GO:0008654">
    <property type="term" value="P:phospholipid biosynthetic process"/>
    <property type="evidence" value="ECO:0007669"/>
    <property type="project" value="UniProtKB-KW"/>
</dbReference>
<dbReference type="FunFam" id="2.60.200.40:FF:000015">
    <property type="entry name" value="Diacylglycerol kinase"/>
    <property type="match status" value="1"/>
</dbReference>
<dbReference type="FunFam" id="3.40.50.10330:FF:000008">
    <property type="entry name" value="Probable lipid kinase YegS"/>
    <property type="match status" value="1"/>
</dbReference>
<dbReference type="Gene3D" id="2.60.200.40">
    <property type="match status" value="1"/>
</dbReference>
<dbReference type="Gene3D" id="3.40.50.10330">
    <property type="entry name" value="Probable inorganic polyphosphate/atp-NAD kinase, domain 1"/>
    <property type="match status" value="1"/>
</dbReference>
<dbReference type="InterPro" id="IPR017438">
    <property type="entry name" value="ATP-NAD_kinase_N"/>
</dbReference>
<dbReference type="InterPro" id="IPR005218">
    <property type="entry name" value="Diacylglycerol/lipid_kinase"/>
</dbReference>
<dbReference type="InterPro" id="IPR001206">
    <property type="entry name" value="Diacylglycerol_kinase_cat_dom"/>
</dbReference>
<dbReference type="InterPro" id="IPR050187">
    <property type="entry name" value="Lipid_Phosphate_FormReg"/>
</dbReference>
<dbReference type="InterPro" id="IPR016064">
    <property type="entry name" value="NAD/diacylglycerol_kinase_sf"/>
</dbReference>
<dbReference type="InterPro" id="IPR045540">
    <property type="entry name" value="YegS/DAGK_C"/>
</dbReference>
<dbReference type="NCBIfam" id="NF009603">
    <property type="entry name" value="PRK13055.1"/>
    <property type="match status" value="1"/>
</dbReference>
<dbReference type="NCBIfam" id="NF009874">
    <property type="entry name" value="PRK13337.1"/>
    <property type="match status" value="1"/>
</dbReference>
<dbReference type="NCBIfam" id="TIGR00147">
    <property type="entry name" value="YegS/Rv2252/BmrU family lipid kinase"/>
    <property type="match status" value="1"/>
</dbReference>
<dbReference type="PANTHER" id="PTHR12358:SF106">
    <property type="entry name" value="LIPID KINASE YEGS"/>
    <property type="match status" value="1"/>
</dbReference>
<dbReference type="PANTHER" id="PTHR12358">
    <property type="entry name" value="SPHINGOSINE KINASE"/>
    <property type="match status" value="1"/>
</dbReference>
<dbReference type="Pfam" id="PF00781">
    <property type="entry name" value="DAGK_cat"/>
    <property type="match status" value="1"/>
</dbReference>
<dbReference type="Pfam" id="PF19279">
    <property type="entry name" value="YegS_C"/>
    <property type="match status" value="1"/>
</dbReference>
<dbReference type="SMART" id="SM00046">
    <property type="entry name" value="DAGKc"/>
    <property type="match status" value="1"/>
</dbReference>
<dbReference type="SUPFAM" id="SSF111331">
    <property type="entry name" value="NAD kinase/diacylglycerol kinase-like"/>
    <property type="match status" value="1"/>
</dbReference>
<dbReference type="PROSITE" id="PS50146">
    <property type="entry name" value="DAGK"/>
    <property type="match status" value="1"/>
</dbReference>
<accession>Q2FWZ2</accession>
<keyword id="KW-0067">ATP-binding</keyword>
<keyword id="KW-0418">Kinase</keyword>
<keyword id="KW-0444">Lipid biosynthesis</keyword>
<keyword id="KW-0443">Lipid metabolism</keyword>
<keyword id="KW-0460">Magnesium</keyword>
<keyword id="KW-0479">Metal-binding</keyword>
<keyword id="KW-0547">Nucleotide-binding</keyword>
<keyword id="KW-0594">Phospholipid biosynthesis</keyword>
<keyword id="KW-1208">Phospholipid metabolism</keyword>
<keyword id="KW-1185">Reference proteome</keyword>
<keyword id="KW-0808">Transferase</keyword>
<comment type="function">
    <text evidence="1">Catalyzes the phosphorylation of diacylglycerol (DAG) into phosphatidic acid. Is a key enzyme involved in the production of lipoteichoic acid by reintroducing DAG formed from the breakdown of membrane phospholipids into the phosphatidylglycerol biosynthetic pathway.</text>
</comment>
<comment type="catalytic activity">
    <reaction evidence="1">
        <text>a 1,2-diacyl-sn-glycerol + ATP = a 1,2-diacyl-sn-glycero-3-phosphate + ADP + H(+)</text>
        <dbReference type="Rhea" id="RHEA:10272"/>
        <dbReference type="ChEBI" id="CHEBI:15378"/>
        <dbReference type="ChEBI" id="CHEBI:17815"/>
        <dbReference type="ChEBI" id="CHEBI:30616"/>
        <dbReference type="ChEBI" id="CHEBI:58608"/>
        <dbReference type="ChEBI" id="CHEBI:456216"/>
        <dbReference type="EC" id="2.7.1.107"/>
    </reaction>
</comment>
<comment type="cofactor">
    <cofactor evidence="1">
        <name>Mg(2+)</name>
        <dbReference type="ChEBI" id="CHEBI:18420"/>
    </cofactor>
    <text evidence="1">Binds 1 Mg(2+) ion per subunit. This ion appears to have a structural role and is required for catalytic activity.</text>
</comment>
<comment type="subunit">
    <text evidence="1">Homodimer.</text>
</comment>
<comment type="similarity">
    <text evidence="3">Belongs to the diacylglycerol/lipid kinase family.</text>
</comment>
<name>DAGK_STAA8</name>
<sequence length="315" mass="34887">MRKRARIIYNPTSGKELFKRELPDALIKLEKAGYETSAYATEKIGDATLEAERAMHENYDVLIAAGGDGTLNEVVNGIAEKPNRPKLGVIPMGTVNDFGRALHIPNDIMGALDVIIEGHSTKVDIGKMNNRYFINLAAGGQLTQVSYETPSKLKSIVGPFAYYIKGFEMLPQMKAVDLRIEYDGNVFQGEALLFFLGLTNSMAGFEKLVPDAKLDDGYFTLIIVEKSNLAELGHIMTLASRGEHTKHPKVIYEKAKAINISSFTDLQLNVDGEYGGKLPANFLNLERHIDVFAPNDIVNEELINNDHVDDNLIEE</sequence>
<proteinExistence type="inferred from homology"/>
<feature type="chain" id="PRO_0000386488" description="Diacylglycerol kinase">
    <location>
        <begin position="1"/>
        <end position="315"/>
    </location>
</feature>
<feature type="domain" description="DAGKc" evidence="2">
    <location>
        <begin position="1"/>
        <end position="132"/>
    </location>
</feature>
<feature type="active site" description="Proton acceptor" evidence="1">
    <location>
        <position position="273"/>
    </location>
</feature>
<feature type="binding site" evidence="2">
    <location>
        <begin position="10"/>
        <end position="14"/>
    </location>
    <ligand>
        <name>ATP</name>
        <dbReference type="ChEBI" id="CHEBI:30616"/>
    </ligand>
</feature>
<feature type="binding site" evidence="2">
    <location>
        <position position="41"/>
    </location>
    <ligand>
        <name>ATP</name>
        <dbReference type="ChEBI" id="CHEBI:30616"/>
    </ligand>
</feature>
<feature type="binding site" evidence="2">
    <location>
        <begin position="67"/>
        <end position="73"/>
    </location>
    <ligand>
        <name>ATP</name>
        <dbReference type="ChEBI" id="CHEBI:30616"/>
    </ligand>
</feature>
<feature type="binding site" evidence="2">
    <location>
        <position position="94"/>
    </location>
    <ligand>
        <name>ATP</name>
        <dbReference type="ChEBI" id="CHEBI:30616"/>
    </ligand>
</feature>
<feature type="binding site" evidence="1">
    <location>
        <position position="213"/>
    </location>
    <ligand>
        <name>Mg(2+)</name>
        <dbReference type="ChEBI" id="CHEBI:18420"/>
    </ligand>
</feature>
<feature type="binding site" evidence="1">
    <location>
        <position position="216"/>
    </location>
    <ligand>
        <name>Mg(2+)</name>
        <dbReference type="ChEBI" id="CHEBI:18420"/>
    </ligand>
</feature>
<feature type="binding site" evidence="1">
    <location>
        <position position="218"/>
    </location>
    <ligand>
        <name>Mg(2+)</name>
        <dbReference type="ChEBI" id="CHEBI:18420"/>
    </ligand>
</feature>
<reference key="1">
    <citation type="book" date="2006" name="Gram positive pathogens, 2nd edition">
        <title>The Staphylococcus aureus NCTC 8325 genome.</title>
        <editorList>
            <person name="Fischetti V."/>
            <person name="Novick R."/>
            <person name="Ferretti J."/>
            <person name="Portnoy D."/>
            <person name="Rood J."/>
        </editorList>
        <authorList>
            <person name="Gillaspy A.F."/>
            <person name="Worrell V."/>
            <person name="Orvis J."/>
            <person name="Roe B.A."/>
            <person name="Dyer D.W."/>
            <person name="Iandolo J.J."/>
        </authorList>
    </citation>
    <scope>NUCLEOTIDE SEQUENCE [LARGE SCALE GENOMIC DNA]</scope>
    <source>
        <strain>NCTC 8325 / PS 47</strain>
    </source>
</reference>